<reference key="1">
    <citation type="journal article" date="1997" name="Gene">
        <title>A Bacillus subtilis locus encoding several gene products affecting transport of cations.</title>
        <authorList>
            <person name="Sturr M.G."/>
            <person name="Ablooglu A.J."/>
            <person name="Krulwich T.A."/>
        </authorList>
    </citation>
    <scope>NUCLEOTIDE SEQUENCE [GENOMIC DNA]</scope>
    <scope>ROLE IN CATION TRANSPORT</scope>
    <source>
        <strain>168 / JH642</strain>
    </source>
</reference>
<reference key="2">
    <citation type="journal article" date="1997" name="Microbiology">
        <title>Sequence of the Bacillus subtilis genome region in the vicinity of the lev operon reveals two new extracytoplasmic function RNA polymerase sigma factors SigV and SigZ.</title>
        <authorList>
            <person name="Sorokin A."/>
            <person name="Bolotin A."/>
            <person name="Purnelle B."/>
            <person name="Hilbert H."/>
            <person name="Lauber J."/>
            <person name="Duesterhoeft A."/>
            <person name="Ehrlich S.D."/>
        </authorList>
    </citation>
    <scope>NUCLEOTIDE SEQUENCE [GENOMIC DNA]</scope>
    <source>
        <strain>168</strain>
    </source>
</reference>
<reference key="3">
    <citation type="journal article" date="1997" name="Nature">
        <title>The complete genome sequence of the Gram-positive bacterium Bacillus subtilis.</title>
        <authorList>
            <person name="Kunst F."/>
            <person name="Ogasawara N."/>
            <person name="Moszer I."/>
            <person name="Albertini A.M."/>
            <person name="Alloni G."/>
            <person name="Azevedo V."/>
            <person name="Bertero M.G."/>
            <person name="Bessieres P."/>
            <person name="Bolotin A."/>
            <person name="Borchert S."/>
            <person name="Borriss R."/>
            <person name="Boursier L."/>
            <person name="Brans A."/>
            <person name="Braun M."/>
            <person name="Brignell S.C."/>
            <person name="Bron S."/>
            <person name="Brouillet S."/>
            <person name="Bruschi C.V."/>
            <person name="Caldwell B."/>
            <person name="Capuano V."/>
            <person name="Carter N.M."/>
            <person name="Choi S.-K."/>
            <person name="Codani J.-J."/>
            <person name="Connerton I.F."/>
            <person name="Cummings N.J."/>
            <person name="Daniel R.A."/>
            <person name="Denizot F."/>
            <person name="Devine K.M."/>
            <person name="Duesterhoeft A."/>
            <person name="Ehrlich S.D."/>
            <person name="Emmerson P.T."/>
            <person name="Entian K.-D."/>
            <person name="Errington J."/>
            <person name="Fabret C."/>
            <person name="Ferrari E."/>
            <person name="Foulger D."/>
            <person name="Fritz C."/>
            <person name="Fujita M."/>
            <person name="Fujita Y."/>
            <person name="Fuma S."/>
            <person name="Galizzi A."/>
            <person name="Galleron N."/>
            <person name="Ghim S.-Y."/>
            <person name="Glaser P."/>
            <person name="Goffeau A."/>
            <person name="Golightly E.J."/>
            <person name="Grandi G."/>
            <person name="Guiseppi G."/>
            <person name="Guy B.J."/>
            <person name="Haga K."/>
            <person name="Haiech J."/>
            <person name="Harwood C.R."/>
            <person name="Henaut A."/>
            <person name="Hilbert H."/>
            <person name="Holsappel S."/>
            <person name="Hosono S."/>
            <person name="Hullo M.-F."/>
            <person name="Itaya M."/>
            <person name="Jones L.-M."/>
            <person name="Joris B."/>
            <person name="Karamata D."/>
            <person name="Kasahara Y."/>
            <person name="Klaerr-Blanchard M."/>
            <person name="Klein C."/>
            <person name="Kobayashi Y."/>
            <person name="Koetter P."/>
            <person name="Koningstein G."/>
            <person name="Krogh S."/>
            <person name="Kumano M."/>
            <person name="Kurita K."/>
            <person name="Lapidus A."/>
            <person name="Lardinois S."/>
            <person name="Lauber J."/>
            <person name="Lazarevic V."/>
            <person name="Lee S.-M."/>
            <person name="Levine A."/>
            <person name="Liu H."/>
            <person name="Masuda S."/>
            <person name="Mauel C."/>
            <person name="Medigue C."/>
            <person name="Medina N."/>
            <person name="Mellado R.P."/>
            <person name="Mizuno M."/>
            <person name="Moestl D."/>
            <person name="Nakai S."/>
            <person name="Noback M."/>
            <person name="Noone D."/>
            <person name="O'Reilly M."/>
            <person name="Ogawa K."/>
            <person name="Ogiwara A."/>
            <person name="Oudega B."/>
            <person name="Park S.-H."/>
            <person name="Parro V."/>
            <person name="Pohl T.M."/>
            <person name="Portetelle D."/>
            <person name="Porwollik S."/>
            <person name="Prescott A.M."/>
            <person name="Presecan E."/>
            <person name="Pujic P."/>
            <person name="Purnelle B."/>
            <person name="Rapoport G."/>
            <person name="Rey M."/>
            <person name="Reynolds S."/>
            <person name="Rieger M."/>
            <person name="Rivolta C."/>
            <person name="Rocha E."/>
            <person name="Roche B."/>
            <person name="Rose M."/>
            <person name="Sadaie Y."/>
            <person name="Sato T."/>
            <person name="Scanlan E."/>
            <person name="Schleich S."/>
            <person name="Schroeter R."/>
            <person name="Scoffone F."/>
            <person name="Sekiguchi J."/>
            <person name="Sekowska A."/>
            <person name="Seror S.J."/>
            <person name="Serror P."/>
            <person name="Shin B.-S."/>
            <person name="Soldo B."/>
            <person name="Sorokin A."/>
            <person name="Tacconi E."/>
            <person name="Takagi T."/>
            <person name="Takahashi H."/>
            <person name="Takemaru K."/>
            <person name="Takeuchi M."/>
            <person name="Tamakoshi A."/>
            <person name="Tanaka T."/>
            <person name="Terpstra P."/>
            <person name="Tognoni A."/>
            <person name="Tosato V."/>
            <person name="Uchiyama S."/>
            <person name="Vandenbol M."/>
            <person name="Vannier F."/>
            <person name="Vassarotti A."/>
            <person name="Viari A."/>
            <person name="Wambutt R."/>
            <person name="Wedler E."/>
            <person name="Wedler H."/>
            <person name="Weitzenegger T."/>
            <person name="Winters P."/>
            <person name="Wipat A."/>
            <person name="Yamamoto H."/>
            <person name="Yamane K."/>
            <person name="Yasumoto K."/>
            <person name="Yata K."/>
            <person name="Yoshida K."/>
            <person name="Yoshikawa H.-F."/>
            <person name="Zumstein E."/>
            <person name="Yoshikawa H."/>
            <person name="Danchin A."/>
        </authorList>
    </citation>
    <scope>NUCLEOTIDE SEQUENCE [LARGE SCALE GENOMIC DNA]</scope>
    <source>
        <strain>168</strain>
    </source>
</reference>
<reference key="4">
    <citation type="journal article" date="2002" name="Mol. Microbiol.">
        <title>An antiport mechanism for a member of the cation diffusion facilitator family: divalent cations efflux in exchange for K+ and H+.</title>
        <authorList>
            <person name="Guffanti A.A."/>
            <person name="Wei Y."/>
            <person name="Rood S.V."/>
            <person name="Krulwich T.A."/>
        </authorList>
    </citation>
    <scope>FUNCTION IN CATION AND POTASSIUM TRANSPORT</scope>
    <scope>POSSIBLE OXIDOREDUCTASE ACTIVITY</scope>
</reference>
<accession>O07085</accession>
<accession>P71024</accession>
<accession>Q796A5</accession>
<feature type="chain" id="PRO_0000337070" description="Uncharacterized oxidoreductase CzcO">
    <location>
        <begin position="1"/>
        <end position="345"/>
    </location>
</feature>
<name>CZCO_BACSU</name>
<dbReference type="EC" id="1.-.-.-"/>
<dbReference type="EMBL" id="U62055">
    <property type="protein sequence ID" value="AAB53030.1"/>
    <property type="status" value="ALT_FRAME"/>
    <property type="molecule type" value="Genomic_DNA"/>
</dbReference>
<dbReference type="EMBL" id="U93876">
    <property type="protein sequence ID" value="AAB80908.1"/>
    <property type="molecule type" value="Genomic_DNA"/>
</dbReference>
<dbReference type="EMBL" id="AL009126">
    <property type="protein sequence ID" value="CAB14605.1"/>
    <property type="molecule type" value="Genomic_DNA"/>
</dbReference>
<dbReference type="PIR" id="E69725">
    <property type="entry name" value="E69725"/>
</dbReference>
<dbReference type="RefSeq" id="NP_390541.1">
    <property type="nucleotide sequence ID" value="NC_000964.3"/>
</dbReference>
<dbReference type="RefSeq" id="WP_003229874.1">
    <property type="nucleotide sequence ID" value="NZ_OZ025638.1"/>
</dbReference>
<dbReference type="SMR" id="O07085"/>
<dbReference type="FunCoup" id="O07085">
    <property type="interactions" value="96"/>
</dbReference>
<dbReference type="STRING" id="224308.BSU26640"/>
<dbReference type="PaxDb" id="224308-BSU26640"/>
<dbReference type="DNASU" id="937340"/>
<dbReference type="EnsemblBacteria" id="CAB14605">
    <property type="protein sequence ID" value="CAB14605"/>
    <property type="gene ID" value="BSU_26640"/>
</dbReference>
<dbReference type="GeneID" id="937340"/>
<dbReference type="KEGG" id="bsu:BSU26640"/>
<dbReference type="PATRIC" id="fig|224308.179.peg.2895"/>
<dbReference type="eggNOG" id="COG2072">
    <property type="taxonomic scope" value="Bacteria"/>
</dbReference>
<dbReference type="InParanoid" id="O07085"/>
<dbReference type="OrthoDB" id="9778740at2"/>
<dbReference type="PhylomeDB" id="O07085"/>
<dbReference type="BioCyc" id="BSUB:BSU26640-MONOMER"/>
<dbReference type="Proteomes" id="UP000001570">
    <property type="component" value="Chromosome"/>
</dbReference>
<dbReference type="GO" id="GO:0005886">
    <property type="term" value="C:plasma membrane"/>
    <property type="evidence" value="ECO:0007669"/>
    <property type="project" value="UniProtKB-SubCell"/>
</dbReference>
<dbReference type="GO" id="GO:0050660">
    <property type="term" value="F:flavin adenine dinucleotide binding"/>
    <property type="evidence" value="ECO:0000318"/>
    <property type="project" value="GO_Central"/>
</dbReference>
<dbReference type="GO" id="GO:0004497">
    <property type="term" value="F:monooxygenase activity"/>
    <property type="evidence" value="ECO:0000318"/>
    <property type="project" value="GO_Central"/>
</dbReference>
<dbReference type="GO" id="GO:0050661">
    <property type="term" value="F:NADP binding"/>
    <property type="evidence" value="ECO:0007669"/>
    <property type="project" value="InterPro"/>
</dbReference>
<dbReference type="GO" id="GO:0006824">
    <property type="term" value="P:cobalt ion transport"/>
    <property type="evidence" value="ECO:0007669"/>
    <property type="project" value="UniProtKB-KW"/>
</dbReference>
<dbReference type="GO" id="GO:0006813">
    <property type="term" value="P:potassium ion transport"/>
    <property type="evidence" value="ECO:0007669"/>
    <property type="project" value="UniProtKB-KW"/>
</dbReference>
<dbReference type="GO" id="GO:0006829">
    <property type="term" value="P:zinc ion transport"/>
    <property type="evidence" value="ECO:0007669"/>
    <property type="project" value="UniProtKB-KW"/>
</dbReference>
<dbReference type="Gene3D" id="3.50.50.60">
    <property type="entry name" value="FAD/NAD(P)-binding domain"/>
    <property type="match status" value="1"/>
</dbReference>
<dbReference type="InterPro" id="IPR050982">
    <property type="entry name" value="Auxin_biosynth/cation_transpt"/>
</dbReference>
<dbReference type="InterPro" id="IPR036188">
    <property type="entry name" value="FAD/NAD-bd_sf"/>
</dbReference>
<dbReference type="InterPro" id="IPR000960">
    <property type="entry name" value="Flavin_mOase"/>
</dbReference>
<dbReference type="PANTHER" id="PTHR43539">
    <property type="entry name" value="FLAVIN-BINDING MONOOXYGENASE-LIKE PROTEIN (AFU_ORTHOLOGUE AFUA_4G09220)"/>
    <property type="match status" value="1"/>
</dbReference>
<dbReference type="PANTHER" id="PTHR43539:SF78">
    <property type="entry name" value="FLAVIN-CONTAINING MONOOXYGENASE"/>
    <property type="match status" value="1"/>
</dbReference>
<dbReference type="Pfam" id="PF13738">
    <property type="entry name" value="Pyr_redox_3"/>
    <property type="match status" value="1"/>
</dbReference>
<dbReference type="PIRSF" id="PIRSF000332">
    <property type="entry name" value="FMO"/>
    <property type="match status" value="1"/>
</dbReference>
<dbReference type="PRINTS" id="PR00368">
    <property type="entry name" value="FADPNR"/>
</dbReference>
<dbReference type="PRINTS" id="PR00469">
    <property type="entry name" value="PNDRDTASEII"/>
</dbReference>
<dbReference type="SUPFAM" id="SSF51905">
    <property type="entry name" value="FAD/NAD(P)-binding domain"/>
    <property type="match status" value="2"/>
</dbReference>
<comment type="function">
    <text evidence="1 2">Involved in potassium and divalent cation transport. Enhances the transport activity of the cation/potassium transporter CzcD.</text>
</comment>
<comment type="subcellular location">
    <subcellularLocation>
        <location evidence="3">Cell membrane</location>
        <topology evidence="3">Peripheral membrane protein</topology>
        <orientation evidence="3">Cytoplasmic side</orientation>
    </subcellularLocation>
</comment>
<comment type="sequence caution" evidence="3">
    <conflict type="frameshift">
        <sequence resource="EMBL-CDS" id="AAB53030"/>
    </conflict>
</comment>
<protein>
    <recommendedName>
        <fullName>Uncharacterized oxidoreductase CzcO</fullName>
        <ecNumber>1.-.-.-</ecNumber>
    </recommendedName>
</protein>
<gene>
    <name type="primary">czcO</name>
    <name type="synonym">trkA</name>
    <name type="synonym">yrdP</name>
    <name type="ordered locus">BSU26640</name>
</gene>
<organism>
    <name type="scientific">Bacillus subtilis (strain 168)</name>
    <dbReference type="NCBI Taxonomy" id="224308"/>
    <lineage>
        <taxon>Bacteria</taxon>
        <taxon>Bacillati</taxon>
        <taxon>Bacillota</taxon>
        <taxon>Bacilli</taxon>
        <taxon>Bacillales</taxon>
        <taxon>Bacillaceae</taxon>
        <taxon>Bacillus</taxon>
    </lineage>
</organism>
<keyword id="KW-0104">Cadmium</keyword>
<keyword id="KW-1003">Cell membrane</keyword>
<keyword id="KW-0170">Cobalt</keyword>
<keyword id="KW-0171">Cobalt transport</keyword>
<keyword id="KW-0406">Ion transport</keyword>
<keyword id="KW-0472">Membrane</keyword>
<keyword id="KW-0560">Oxidoreductase</keyword>
<keyword id="KW-0630">Potassium</keyword>
<keyword id="KW-0633">Potassium transport</keyword>
<keyword id="KW-1185">Reference proteome</keyword>
<keyword id="KW-0813">Transport</keyword>
<keyword id="KW-0862">Zinc</keyword>
<keyword id="KW-0864">Zinc transport</keyword>
<sequence length="345" mass="39065">MYDTIVIGAGQAGISIGYYLKQSDQKFIILDKSHEVGESWKDRYDSLVLFTSRMYSSLPGMHLEGEKHGFPSKNEIVAYLKKYVKKFEIPIQLRTEVISVLKIKNYFLIKTNREEYQTKNLVIATGPFHTPNIPSISKDLSDNINQLHSSQYKNSKQLAYGNVLVVGGGNSGAQIAVELSKERVTYLACSNKLVYFPLMIGKRSIFWWFDKLGVLHASHTSIVGKFIQKKGDPVFGHELKHAIKQKEIILKKRVIAAKQNEIIFKDSSTLEVNNIIWATGFRNPLCWINIKGVLDQEGRIIHHRGVSPVEGLYFIGLPWQHKRGSALLQGVGNDAEYIVKQMNGE</sequence>
<evidence type="ECO:0000269" key="1">
    <source>
    </source>
</evidence>
<evidence type="ECO:0000269" key="2">
    <source>
    </source>
</evidence>
<evidence type="ECO:0000305" key="3"/>
<proteinExistence type="evidence at protein level"/>